<feature type="chain" id="PRO_1000186819" description="D-erythrose-4-phosphate dehydrogenase">
    <location>
        <begin position="1"/>
        <end position="339"/>
    </location>
</feature>
<feature type="active site" description="Nucleophile" evidence="1">
    <location>
        <position position="155"/>
    </location>
</feature>
<feature type="binding site" evidence="1">
    <location>
        <begin position="12"/>
        <end position="13"/>
    </location>
    <ligand>
        <name>NAD(+)</name>
        <dbReference type="ChEBI" id="CHEBI:57540"/>
    </ligand>
</feature>
<feature type="binding site" evidence="1">
    <location>
        <position position="81"/>
    </location>
    <ligand>
        <name>NAD(+)</name>
        <dbReference type="ChEBI" id="CHEBI:57540"/>
    </ligand>
</feature>
<feature type="binding site" evidence="1">
    <location>
        <begin position="154"/>
        <end position="156"/>
    </location>
    <ligand>
        <name>substrate</name>
    </ligand>
</feature>
<feature type="binding site" evidence="1">
    <location>
        <position position="200"/>
    </location>
    <ligand>
        <name>substrate</name>
    </ligand>
</feature>
<feature type="binding site" evidence="1">
    <location>
        <begin position="213"/>
        <end position="214"/>
    </location>
    <ligand>
        <name>substrate</name>
    </ligand>
</feature>
<feature type="binding site" evidence="1">
    <location>
        <position position="236"/>
    </location>
    <ligand>
        <name>substrate</name>
    </ligand>
</feature>
<feature type="binding site" evidence="1">
    <location>
        <position position="318"/>
    </location>
    <ligand>
        <name>NAD(+)</name>
        <dbReference type="ChEBI" id="CHEBI:57540"/>
    </ligand>
</feature>
<feature type="site" description="Activates thiol group during catalysis" evidence="1">
    <location>
        <position position="182"/>
    </location>
</feature>
<reference key="1">
    <citation type="journal article" date="2009" name="PLoS Genet.">
        <title>Organised genome dynamics in the Escherichia coli species results in highly diverse adaptive paths.</title>
        <authorList>
            <person name="Touchon M."/>
            <person name="Hoede C."/>
            <person name="Tenaillon O."/>
            <person name="Barbe V."/>
            <person name="Baeriswyl S."/>
            <person name="Bidet P."/>
            <person name="Bingen E."/>
            <person name="Bonacorsi S."/>
            <person name="Bouchier C."/>
            <person name="Bouvet O."/>
            <person name="Calteau A."/>
            <person name="Chiapello H."/>
            <person name="Clermont O."/>
            <person name="Cruveiller S."/>
            <person name="Danchin A."/>
            <person name="Diard M."/>
            <person name="Dossat C."/>
            <person name="Karoui M.E."/>
            <person name="Frapy E."/>
            <person name="Garry L."/>
            <person name="Ghigo J.M."/>
            <person name="Gilles A.M."/>
            <person name="Johnson J."/>
            <person name="Le Bouguenec C."/>
            <person name="Lescat M."/>
            <person name="Mangenot S."/>
            <person name="Martinez-Jehanne V."/>
            <person name="Matic I."/>
            <person name="Nassif X."/>
            <person name="Oztas S."/>
            <person name="Petit M.A."/>
            <person name="Pichon C."/>
            <person name="Rouy Z."/>
            <person name="Ruf C.S."/>
            <person name="Schneider D."/>
            <person name="Tourret J."/>
            <person name="Vacherie B."/>
            <person name="Vallenet D."/>
            <person name="Medigue C."/>
            <person name="Rocha E.P.C."/>
            <person name="Denamur E."/>
        </authorList>
    </citation>
    <scope>NUCLEOTIDE SEQUENCE [LARGE SCALE GENOMIC DNA]</scope>
    <source>
        <strain>55989 / EAEC</strain>
    </source>
</reference>
<name>E4PD_ECO55</name>
<accession>B7LFI3</accession>
<dbReference type="EC" id="1.2.1.72" evidence="1"/>
<dbReference type="EMBL" id="CU928145">
    <property type="protein sequence ID" value="CAU99194.1"/>
    <property type="molecule type" value="Genomic_DNA"/>
</dbReference>
<dbReference type="RefSeq" id="WP_000218480.1">
    <property type="nucleotide sequence ID" value="NZ_CP028304.1"/>
</dbReference>
<dbReference type="SMR" id="B7LFI3"/>
<dbReference type="GeneID" id="93779071"/>
<dbReference type="KEGG" id="eck:EC55989_3215"/>
<dbReference type="HOGENOM" id="CLU_030140_0_2_6"/>
<dbReference type="UniPathway" id="UPA00244">
    <property type="reaction ID" value="UER00309"/>
</dbReference>
<dbReference type="Proteomes" id="UP000000746">
    <property type="component" value="Chromosome"/>
</dbReference>
<dbReference type="GO" id="GO:0005737">
    <property type="term" value="C:cytoplasm"/>
    <property type="evidence" value="ECO:0007669"/>
    <property type="project" value="UniProtKB-SubCell"/>
</dbReference>
<dbReference type="GO" id="GO:0048001">
    <property type="term" value="F:erythrose-4-phosphate dehydrogenase activity"/>
    <property type="evidence" value="ECO:0007669"/>
    <property type="project" value="UniProtKB-UniRule"/>
</dbReference>
<dbReference type="GO" id="GO:0051287">
    <property type="term" value="F:NAD binding"/>
    <property type="evidence" value="ECO:0007669"/>
    <property type="project" value="InterPro"/>
</dbReference>
<dbReference type="GO" id="GO:0042823">
    <property type="term" value="P:pyridoxal phosphate biosynthetic process"/>
    <property type="evidence" value="ECO:0007669"/>
    <property type="project" value="UniProtKB-UniRule"/>
</dbReference>
<dbReference type="GO" id="GO:0008615">
    <property type="term" value="P:pyridoxine biosynthetic process"/>
    <property type="evidence" value="ECO:0007669"/>
    <property type="project" value="UniProtKB-UniRule"/>
</dbReference>
<dbReference type="CDD" id="cd23937">
    <property type="entry name" value="GAPDH_C_E4PDH"/>
    <property type="match status" value="1"/>
</dbReference>
<dbReference type="CDD" id="cd17892">
    <property type="entry name" value="GAPDH_N_E4PDH"/>
    <property type="match status" value="1"/>
</dbReference>
<dbReference type="FunFam" id="3.30.360.10:FF:000007">
    <property type="entry name" value="D-erythrose-4-phosphate dehydrogenase"/>
    <property type="match status" value="1"/>
</dbReference>
<dbReference type="FunFam" id="3.40.50.720:FF:000001">
    <property type="entry name" value="Glyceraldehyde-3-phosphate dehydrogenase"/>
    <property type="match status" value="1"/>
</dbReference>
<dbReference type="Gene3D" id="3.30.360.10">
    <property type="entry name" value="Dihydrodipicolinate Reductase, domain 2"/>
    <property type="match status" value="1"/>
</dbReference>
<dbReference type="Gene3D" id="3.40.50.720">
    <property type="entry name" value="NAD(P)-binding Rossmann-like Domain"/>
    <property type="match status" value="1"/>
</dbReference>
<dbReference type="HAMAP" id="MF_01640">
    <property type="entry name" value="E4P_dehydrog"/>
    <property type="match status" value="1"/>
</dbReference>
<dbReference type="InterPro" id="IPR006422">
    <property type="entry name" value="E4P_DH_bac"/>
</dbReference>
<dbReference type="InterPro" id="IPR020831">
    <property type="entry name" value="GlycerAld/Erythrose_P_DH"/>
</dbReference>
<dbReference type="InterPro" id="IPR020830">
    <property type="entry name" value="GlycerAld_3-P_DH_AS"/>
</dbReference>
<dbReference type="InterPro" id="IPR020829">
    <property type="entry name" value="GlycerAld_3-P_DH_cat"/>
</dbReference>
<dbReference type="InterPro" id="IPR020828">
    <property type="entry name" value="GlycerAld_3-P_DH_NAD(P)-bd"/>
</dbReference>
<dbReference type="InterPro" id="IPR036291">
    <property type="entry name" value="NAD(P)-bd_dom_sf"/>
</dbReference>
<dbReference type="NCBIfam" id="TIGR01532">
    <property type="entry name" value="E4PD_g-proteo"/>
    <property type="match status" value="1"/>
</dbReference>
<dbReference type="NCBIfam" id="NF010058">
    <property type="entry name" value="PRK13535.1"/>
    <property type="match status" value="1"/>
</dbReference>
<dbReference type="PANTHER" id="PTHR43148">
    <property type="entry name" value="GLYCERALDEHYDE-3-PHOSPHATE DEHYDROGENASE 2"/>
    <property type="match status" value="1"/>
</dbReference>
<dbReference type="Pfam" id="PF02800">
    <property type="entry name" value="Gp_dh_C"/>
    <property type="match status" value="1"/>
</dbReference>
<dbReference type="Pfam" id="PF00044">
    <property type="entry name" value="Gp_dh_N"/>
    <property type="match status" value="1"/>
</dbReference>
<dbReference type="PIRSF" id="PIRSF000149">
    <property type="entry name" value="GAP_DH"/>
    <property type="match status" value="1"/>
</dbReference>
<dbReference type="PRINTS" id="PR00078">
    <property type="entry name" value="G3PDHDRGNASE"/>
</dbReference>
<dbReference type="SMART" id="SM00846">
    <property type="entry name" value="Gp_dh_N"/>
    <property type="match status" value="1"/>
</dbReference>
<dbReference type="SUPFAM" id="SSF55347">
    <property type="entry name" value="Glyceraldehyde-3-phosphate dehydrogenase-like, C-terminal domain"/>
    <property type="match status" value="1"/>
</dbReference>
<dbReference type="SUPFAM" id="SSF51735">
    <property type="entry name" value="NAD(P)-binding Rossmann-fold domains"/>
    <property type="match status" value="1"/>
</dbReference>
<dbReference type="PROSITE" id="PS00071">
    <property type="entry name" value="GAPDH"/>
    <property type="match status" value="1"/>
</dbReference>
<comment type="function">
    <text evidence="1">Catalyzes the NAD-dependent conversion of D-erythrose 4-phosphate to 4-phosphoerythronate.</text>
</comment>
<comment type="catalytic activity">
    <reaction evidence="1">
        <text>D-erythrose 4-phosphate + NAD(+) + H2O = 4-phospho-D-erythronate + NADH + 2 H(+)</text>
        <dbReference type="Rhea" id="RHEA:12056"/>
        <dbReference type="ChEBI" id="CHEBI:15377"/>
        <dbReference type="ChEBI" id="CHEBI:15378"/>
        <dbReference type="ChEBI" id="CHEBI:16897"/>
        <dbReference type="ChEBI" id="CHEBI:57540"/>
        <dbReference type="ChEBI" id="CHEBI:57945"/>
        <dbReference type="ChEBI" id="CHEBI:58766"/>
        <dbReference type="EC" id="1.2.1.72"/>
    </reaction>
</comment>
<comment type="pathway">
    <text evidence="1">Cofactor biosynthesis; pyridoxine 5'-phosphate biosynthesis; pyridoxine 5'-phosphate from D-erythrose 4-phosphate: step 1/5.</text>
</comment>
<comment type="subunit">
    <text evidence="1">Homotetramer.</text>
</comment>
<comment type="subcellular location">
    <subcellularLocation>
        <location evidence="1">Cytoplasm</location>
    </subcellularLocation>
</comment>
<comment type="similarity">
    <text evidence="1">Belongs to the glyceraldehyde-3-phosphate dehydrogenase family. Epd subfamily.</text>
</comment>
<gene>
    <name evidence="1" type="primary">epd</name>
    <name type="ordered locus">EC55989_3215</name>
</gene>
<proteinExistence type="inferred from homology"/>
<evidence type="ECO:0000255" key="1">
    <source>
        <dbReference type="HAMAP-Rule" id="MF_01640"/>
    </source>
</evidence>
<keyword id="KW-0963">Cytoplasm</keyword>
<keyword id="KW-0520">NAD</keyword>
<keyword id="KW-0560">Oxidoreductase</keyword>
<keyword id="KW-0664">Pyridoxine biosynthesis</keyword>
<keyword id="KW-1185">Reference proteome</keyword>
<sequence length="339" mass="37299">MTVRVAINGFGRIGRNVVRALYESGRRAEITVVAINELADAAGMAHLLKYDTSHGRFAWEVRQERDQLFVGDDAIRVLHERSLQSLPWRELGVDVVLDCTGVYGSREHGEAHIAAGAKKVLFSHPGSNDLDATVVYGVNQDQLRAEHRIVSNASCTTNCIIPVIKLLDDAYGIESGTVTTIHSAMHDQQVIDAYHPDLRRTRAASQSIIPVDTKLAAGITRFFPQFNDRFEAIAVRVPTINVTAIDLSVTVKKPVKANEVNLLLQKAAQGAFHGIVDYTELPLVSVDFNHDPHSAIVDGTQTRVSGAHLIKTLVWCDNEWGFANRMLDTTLAMATVAFR</sequence>
<organism>
    <name type="scientific">Escherichia coli (strain 55989 / EAEC)</name>
    <dbReference type="NCBI Taxonomy" id="585055"/>
    <lineage>
        <taxon>Bacteria</taxon>
        <taxon>Pseudomonadati</taxon>
        <taxon>Pseudomonadota</taxon>
        <taxon>Gammaproteobacteria</taxon>
        <taxon>Enterobacterales</taxon>
        <taxon>Enterobacteriaceae</taxon>
        <taxon>Escherichia</taxon>
    </lineage>
</organism>
<protein>
    <recommendedName>
        <fullName evidence="1">D-erythrose-4-phosphate dehydrogenase</fullName>
        <shortName evidence="1">E4PDH</shortName>
        <ecNumber evidence="1">1.2.1.72</ecNumber>
    </recommendedName>
</protein>